<keyword id="KW-0963">Cytoplasm</keyword>
<keyword id="KW-0488">Methylation</keyword>
<keyword id="KW-0648">Protein biosynthesis</keyword>
<accession>A0ALM8</accession>
<comment type="function">
    <text evidence="1">Peptide chain release factor 1 directs the termination of translation in response to the peptide chain termination codons UAG and UAA.</text>
</comment>
<comment type="subcellular location">
    <subcellularLocation>
        <location evidence="1">Cytoplasm</location>
    </subcellularLocation>
</comment>
<comment type="PTM">
    <text evidence="1">Methylated by PrmC. Methylation increases the termination efficiency of RF1.</text>
</comment>
<comment type="similarity">
    <text evidence="1">Belongs to the prokaryotic/mitochondrial release factor family.</text>
</comment>
<gene>
    <name evidence="1" type="primary">prfA</name>
    <name type="ordered locus">lwe2492</name>
</gene>
<sequence length="358" mass="40723">MYDRLQAVEDRYDELNELLSDPDVVSDPKRLRDLSKEQSGITATVETYREYKNVNEQIDETRELLGEKLDDEMREMAKEEFAELQKEKAELEERLKLLLVPKDPNDDKNVILEIRGAAGGDEAALFAGDLFRMYSKYAESRGWKVEIMDANPTGIGGYKEIIAMMNGNDAFSRMKYENGAHRVQRVPETESGGRIHTSTATVAILPEAEEVEIELHDKDIRTDTFASTGAGGQSVNTTMSAVRLTHIPTGIVVSMQDERSQLKNKDKAMKVLRARVYDKFEREAREEYDANRKSAVGTGDRSERIRTYNYPQNRVTDHRIGLTIQKLDQIMEGKLDEIIDALILEDQTSKLEHLNDAN</sequence>
<protein>
    <recommendedName>
        <fullName evidence="1">Peptide chain release factor 1</fullName>
        <shortName evidence="1">RF-1</shortName>
    </recommendedName>
</protein>
<evidence type="ECO:0000255" key="1">
    <source>
        <dbReference type="HAMAP-Rule" id="MF_00093"/>
    </source>
</evidence>
<dbReference type="EMBL" id="AM263198">
    <property type="protein sequence ID" value="CAK21910.1"/>
    <property type="molecule type" value="Genomic_DNA"/>
</dbReference>
<dbReference type="RefSeq" id="WP_003764009.1">
    <property type="nucleotide sequence ID" value="NC_008555.1"/>
</dbReference>
<dbReference type="SMR" id="A0ALM8"/>
<dbReference type="STRING" id="386043.lwe2492"/>
<dbReference type="GeneID" id="61190411"/>
<dbReference type="KEGG" id="lwe:lwe2492"/>
<dbReference type="eggNOG" id="COG0216">
    <property type="taxonomic scope" value="Bacteria"/>
</dbReference>
<dbReference type="HOGENOM" id="CLU_036856_0_1_9"/>
<dbReference type="OrthoDB" id="9806673at2"/>
<dbReference type="Proteomes" id="UP000000779">
    <property type="component" value="Chromosome"/>
</dbReference>
<dbReference type="GO" id="GO:0005737">
    <property type="term" value="C:cytoplasm"/>
    <property type="evidence" value="ECO:0007669"/>
    <property type="project" value="UniProtKB-SubCell"/>
</dbReference>
<dbReference type="GO" id="GO:0016149">
    <property type="term" value="F:translation release factor activity, codon specific"/>
    <property type="evidence" value="ECO:0007669"/>
    <property type="project" value="UniProtKB-UniRule"/>
</dbReference>
<dbReference type="FunFam" id="3.30.160.20:FF:000004">
    <property type="entry name" value="Peptide chain release factor 1"/>
    <property type="match status" value="1"/>
</dbReference>
<dbReference type="FunFam" id="3.30.70.1660:FF:000002">
    <property type="entry name" value="Peptide chain release factor 1"/>
    <property type="match status" value="1"/>
</dbReference>
<dbReference type="FunFam" id="3.30.70.1660:FF:000004">
    <property type="entry name" value="Peptide chain release factor 1"/>
    <property type="match status" value="1"/>
</dbReference>
<dbReference type="Gene3D" id="3.30.160.20">
    <property type="match status" value="1"/>
</dbReference>
<dbReference type="Gene3D" id="3.30.70.1660">
    <property type="match status" value="1"/>
</dbReference>
<dbReference type="Gene3D" id="6.10.140.1950">
    <property type="match status" value="1"/>
</dbReference>
<dbReference type="HAMAP" id="MF_00093">
    <property type="entry name" value="Rel_fac_1"/>
    <property type="match status" value="1"/>
</dbReference>
<dbReference type="InterPro" id="IPR005139">
    <property type="entry name" value="PCRF"/>
</dbReference>
<dbReference type="InterPro" id="IPR000352">
    <property type="entry name" value="Pep_chain_release_fac_I"/>
</dbReference>
<dbReference type="InterPro" id="IPR045853">
    <property type="entry name" value="Pep_chain_release_fac_I_sf"/>
</dbReference>
<dbReference type="InterPro" id="IPR050057">
    <property type="entry name" value="Prokaryotic/Mito_RF"/>
</dbReference>
<dbReference type="InterPro" id="IPR004373">
    <property type="entry name" value="RF-1"/>
</dbReference>
<dbReference type="NCBIfam" id="TIGR00019">
    <property type="entry name" value="prfA"/>
    <property type="match status" value="1"/>
</dbReference>
<dbReference type="NCBIfam" id="NF001859">
    <property type="entry name" value="PRK00591.1"/>
    <property type="match status" value="1"/>
</dbReference>
<dbReference type="PANTHER" id="PTHR43804">
    <property type="entry name" value="LD18447P"/>
    <property type="match status" value="1"/>
</dbReference>
<dbReference type="PANTHER" id="PTHR43804:SF7">
    <property type="entry name" value="LD18447P"/>
    <property type="match status" value="1"/>
</dbReference>
<dbReference type="Pfam" id="PF03462">
    <property type="entry name" value="PCRF"/>
    <property type="match status" value="1"/>
</dbReference>
<dbReference type="Pfam" id="PF00472">
    <property type="entry name" value="RF-1"/>
    <property type="match status" value="1"/>
</dbReference>
<dbReference type="SMART" id="SM00937">
    <property type="entry name" value="PCRF"/>
    <property type="match status" value="1"/>
</dbReference>
<dbReference type="SUPFAM" id="SSF75620">
    <property type="entry name" value="Release factor"/>
    <property type="match status" value="1"/>
</dbReference>
<dbReference type="PROSITE" id="PS00745">
    <property type="entry name" value="RF_PROK_I"/>
    <property type="match status" value="1"/>
</dbReference>
<feature type="chain" id="PRO_1000004910" description="Peptide chain release factor 1">
    <location>
        <begin position="1"/>
        <end position="358"/>
    </location>
</feature>
<feature type="modified residue" description="N5-methylglutamine" evidence="1">
    <location>
        <position position="233"/>
    </location>
</feature>
<proteinExistence type="inferred from homology"/>
<organism>
    <name type="scientific">Listeria welshimeri serovar 6b (strain ATCC 35897 / DSM 20650 / CCUG 15529 / CIP 8149 / NCTC 11857 / SLCC 5334 / V8)</name>
    <dbReference type="NCBI Taxonomy" id="386043"/>
    <lineage>
        <taxon>Bacteria</taxon>
        <taxon>Bacillati</taxon>
        <taxon>Bacillota</taxon>
        <taxon>Bacilli</taxon>
        <taxon>Bacillales</taxon>
        <taxon>Listeriaceae</taxon>
        <taxon>Listeria</taxon>
    </lineage>
</organism>
<reference key="1">
    <citation type="journal article" date="2006" name="J. Bacteriol.">
        <title>Whole-genome sequence of Listeria welshimeri reveals common steps in genome reduction with Listeria innocua as compared to Listeria monocytogenes.</title>
        <authorList>
            <person name="Hain T."/>
            <person name="Steinweg C."/>
            <person name="Kuenne C.T."/>
            <person name="Billion A."/>
            <person name="Ghai R."/>
            <person name="Chatterjee S.S."/>
            <person name="Domann E."/>
            <person name="Kaerst U."/>
            <person name="Goesmann A."/>
            <person name="Bekel T."/>
            <person name="Bartels D."/>
            <person name="Kaiser O."/>
            <person name="Meyer F."/>
            <person name="Puehler A."/>
            <person name="Weisshaar B."/>
            <person name="Wehland J."/>
            <person name="Liang C."/>
            <person name="Dandekar T."/>
            <person name="Lampidis R."/>
            <person name="Kreft J."/>
            <person name="Goebel W."/>
            <person name="Chakraborty T."/>
        </authorList>
    </citation>
    <scope>NUCLEOTIDE SEQUENCE [LARGE SCALE GENOMIC DNA]</scope>
    <source>
        <strain>ATCC 35897 / DSM 20650 / CCUG 15529 / CIP 8149 / NCTC 11857 / SLCC 5334 / V8</strain>
    </source>
</reference>
<name>RF1_LISW6</name>